<accession>Q3T0D6</accession>
<comment type="function">
    <text evidence="1">Galectin that binds lactose and a related range of sugars. May be involved in the assembly of adherens junctions (By similarity).</text>
</comment>
<comment type="subunit">
    <text evidence="1">Monomer.</text>
</comment>
<comment type="domain">
    <text evidence="1">Contains two homologous but distinct carbohydrate-binding domains.</text>
</comment>
<protein>
    <recommendedName>
        <fullName>Galectin-4</fullName>
        <shortName>Gal-4</shortName>
    </recommendedName>
</protein>
<proteinExistence type="evidence at transcript level"/>
<evidence type="ECO:0000250" key="1"/>
<evidence type="ECO:0000250" key="2">
    <source>
        <dbReference type="UniProtKB" id="P38552"/>
    </source>
</evidence>
<evidence type="ECO:0000255" key="3">
    <source>
        <dbReference type="PROSITE-ProRule" id="PRU00639"/>
    </source>
</evidence>
<gene>
    <name type="primary">LGALS4</name>
</gene>
<feature type="chain" id="PRO_0000283724" description="Galectin-4">
    <location>
        <begin position="1"/>
        <end position="332"/>
    </location>
</feature>
<feature type="domain" description="Galectin 1" evidence="3">
    <location>
        <begin position="19"/>
        <end position="150"/>
    </location>
</feature>
<feature type="domain" description="Galectin 2" evidence="3">
    <location>
        <begin position="203"/>
        <end position="332"/>
    </location>
</feature>
<feature type="binding site" evidence="1">
    <location>
        <begin position="265"/>
        <end position="271"/>
    </location>
    <ligand>
        <name>a beta-D-galactoside</name>
        <dbReference type="ChEBI" id="CHEBI:28034"/>
    </ligand>
</feature>
<feature type="modified residue" description="Phosphoserine" evidence="2">
    <location>
        <position position="267"/>
    </location>
</feature>
<organism>
    <name type="scientific">Bos taurus</name>
    <name type="common">Bovine</name>
    <dbReference type="NCBI Taxonomy" id="9913"/>
    <lineage>
        <taxon>Eukaryota</taxon>
        <taxon>Metazoa</taxon>
        <taxon>Chordata</taxon>
        <taxon>Craniata</taxon>
        <taxon>Vertebrata</taxon>
        <taxon>Euteleostomi</taxon>
        <taxon>Mammalia</taxon>
        <taxon>Eutheria</taxon>
        <taxon>Laurasiatheria</taxon>
        <taxon>Artiodactyla</taxon>
        <taxon>Ruminantia</taxon>
        <taxon>Pecora</taxon>
        <taxon>Bovidae</taxon>
        <taxon>Bovinae</taxon>
        <taxon>Bos</taxon>
    </lineage>
</organism>
<keyword id="KW-0430">Lectin</keyword>
<keyword id="KW-0597">Phosphoprotein</keyword>
<keyword id="KW-1185">Reference proteome</keyword>
<keyword id="KW-0677">Repeat</keyword>
<name>LEG4_BOVIN</name>
<sequence length="332" mass="37171">MAFVPAPGYQPTYNPTLPYHNPIPGGLRVGMSVYIQGVASEHMKRFFVNFEVGQGQGADVAFHFNPRFDGWDKVVLNSKQNGSWGQEERKMSMPFRKGAAFELVFMVMTEHFKVVVNGTPFHEFKHRIPLQMVTHLHVDGDLMLQSINFIGGQPPSNQMPMPAQAYPMPMSAQAYPSPGQYYQQQSRLPTMEGPPAFNPPVPFNGRLQGGLIVRRTIIIKGYIPPTAKSFVINFKVGSSGDVALHINPRMTEGAVVRNSFLNGSWGSEERKVSYNPFGPGQFFDLSVRCGADRFKVYANGKHLFDFSHRLSAFQRVDLVEIHGDVTLSYVQI</sequence>
<reference key="1">
    <citation type="submission" date="2005-08" db="EMBL/GenBank/DDBJ databases">
        <authorList>
            <consortium name="NIH - Mammalian Gene Collection (MGC) project"/>
        </authorList>
    </citation>
    <scope>NUCLEOTIDE SEQUENCE [LARGE SCALE MRNA]</scope>
    <source>
        <strain>Crossbred X Angus</strain>
        <tissue>Ileum</tissue>
    </source>
</reference>
<dbReference type="EMBL" id="BC102444">
    <property type="protein sequence ID" value="AAI02445.1"/>
    <property type="molecule type" value="mRNA"/>
</dbReference>
<dbReference type="RefSeq" id="NP_001029940.1">
    <property type="nucleotide sequence ID" value="NM_001034768.2"/>
</dbReference>
<dbReference type="SMR" id="Q3T0D6"/>
<dbReference type="FunCoup" id="Q3T0D6">
    <property type="interactions" value="73"/>
</dbReference>
<dbReference type="STRING" id="9913.ENSBTAP00000021701"/>
<dbReference type="PaxDb" id="9913-ENSBTAP00000021701"/>
<dbReference type="PeptideAtlas" id="Q3T0D6"/>
<dbReference type="Ensembl" id="ENSBTAT00000089640.1">
    <property type="protein sequence ID" value="ENSBTAP00000091917.1"/>
    <property type="gene ID" value="ENSBTAG00000016312.7"/>
</dbReference>
<dbReference type="GeneID" id="614804"/>
<dbReference type="KEGG" id="bta:614804"/>
<dbReference type="CTD" id="3960"/>
<dbReference type="VGNC" id="VGNC:30854">
    <property type="gene designation" value="LGALS4"/>
</dbReference>
<dbReference type="eggNOG" id="KOG3587">
    <property type="taxonomic scope" value="Eukaryota"/>
</dbReference>
<dbReference type="GeneTree" id="ENSGT00940000160378"/>
<dbReference type="InParanoid" id="Q3T0D6"/>
<dbReference type="OrthoDB" id="6251307at2759"/>
<dbReference type="Proteomes" id="UP000009136">
    <property type="component" value="Chromosome 18"/>
</dbReference>
<dbReference type="GO" id="GO:0030246">
    <property type="term" value="F:carbohydrate binding"/>
    <property type="evidence" value="ECO:0000318"/>
    <property type="project" value="GO_Central"/>
</dbReference>
<dbReference type="CDD" id="cd00070">
    <property type="entry name" value="GLECT"/>
    <property type="match status" value="2"/>
</dbReference>
<dbReference type="FunFam" id="2.60.120.200:FF:000124">
    <property type="entry name" value="Galectin-4"/>
    <property type="match status" value="2"/>
</dbReference>
<dbReference type="Gene3D" id="2.60.120.200">
    <property type="match status" value="2"/>
</dbReference>
<dbReference type="InterPro" id="IPR013320">
    <property type="entry name" value="ConA-like_dom_sf"/>
</dbReference>
<dbReference type="InterPro" id="IPR044156">
    <property type="entry name" value="Galectin-like"/>
</dbReference>
<dbReference type="InterPro" id="IPR001079">
    <property type="entry name" value="Galectin_CRD"/>
</dbReference>
<dbReference type="PANTHER" id="PTHR11346">
    <property type="entry name" value="GALECTIN"/>
    <property type="match status" value="1"/>
</dbReference>
<dbReference type="PANTHER" id="PTHR11346:SF32">
    <property type="entry name" value="GALECTIN-4"/>
    <property type="match status" value="1"/>
</dbReference>
<dbReference type="Pfam" id="PF00337">
    <property type="entry name" value="Gal-bind_lectin"/>
    <property type="match status" value="2"/>
</dbReference>
<dbReference type="SMART" id="SM00908">
    <property type="entry name" value="Gal-bind_lectin"/>
    <property type="match status" value="2"/>
</dbReference>
<dbReference type="SMART" id="SM00276">
    <property type="entry name" value="GLECT"/>
    <property type="match status" value="2"/>
</dbReference>
<dbReference type="SUPFAM" id="SSF49899">
    <property type="entry name" value="Concanavalin A-like lectins/glucanases"/>
    <property type="match status" value="2"/>
</dbReference>
<dbReference type="PROSITE" id="PS51304">
    <property type="entry name" value="GALECTIN"/>
    <property type="match status" value="2"/>
</dbReference>